<keyword id="KW-0963">Cytoplasm</keyword>
<keyword id="KW-0274">FAD</keyword>
<keyword id="KW-0285">Flavoprotein</keyword>
<keyword id="KW-0520">NAD</keyword>
<keyword id="KW-0819">tRNA processing</keyword>
<dbReference type="EMBL" id="CP001233">
    <property type="protein sequence ID" value="ACP06987.1"/>
    <property type="molecule type" value="Genomic_DNA"/>
</dbReference>
<dbReference type="RefSeq" id="WP_000965608.1">
    <property type="nucleotide sequence ID" value="NC_012578.1"/>
</dbReference>
<dbReference type="SMR" id="C3LSK0"/>
<dbReference type="KEGG" id="vcm:VCM66_2695"/>
<dbReference type="HOGENOM" id="CLU_007831_2_2_6"/>
<dbReference type="Proteomes" id="UP000001217">
    <property type="component" value="Chromosome I"/>
</dbReference>
<dbReference type="GO" id="GO:0005829">
    <property type="term" value="C:cytosol"/>
    <property type="evidence" value="ECO:0007669"/>
    <property type="project" value="TreeGrafter"/>
</dbReference>
<dbReference type="GO" id="GO:0050660">
    <property type="term" value="F:flavin adenine dinucleotide binding"/>
    <property type="evidence" value="ECO:0007669"/>
    <property type="project" value="UniProtKB-UniRule"/>
</dbReference>
<dbReference type="GO" id="GO:0030488">
    <property type="term" value="P:tRNA methylation"/>
    <property type="evidence" value="ECO:0007669"/>
    <property type="project" value="TreeGrafter"/>
</dbReference>
<dbReference type="GO" id="GO:0002098">
    <property type="term" value="P:tRNA wobble uridine modification"/>
    <property type="evidence" value="ECO:0007669"/>
    <property type="project" value="InterPro"/>
</dbReference>
<dbReference type="FunFam" id="1.10.10.1800:FF:000001">
    <property type="entry name" value="tRNA uridine 5-carboxymethylaminomethyl modification enzyme MnmG"/>
    <property type="match status" value="1"/>
</dbReference>
<dbReference type="FunFam" id="1.10.150.570:FF:000001">
    <property type="entry name" value="tRNA uridine 5-carboxymethylaminomethyl modification enzyme MnmG"/>
    <property type="match status" value="1"/>
</dbReference>
<dbReference type="FunFam" id="3.50.50.60:FF:000002">
    <property type="entry name" value="tRNA uridine 5-carboxymethylaminomethyl modification enzyme MnmG"/>
    <property type="match status" value="1"/>
</dbReference>
<dbReference type="FunFam" id="3.50.50.60:FF:000010">
    <property type="entry name" value="tRNA uridine 5-carboxymethylaminomethyl modification enzyme MnmG"/>
    <property type="match status" value="1"/>
</dbReference>
<dbReference type="Gene3D" id="3.50.50.60">
    <property type="entry name" value="FAD/NAD(P)-binding domain"/>
    <property type="match status" value="2"/>
</dbReference>
<dbReference type="Gene3D" id="1.10.150.570">
    <property type="entry name" value="GidA associated domain, C-terminal subdomain"/>
    <property type="match status" value="1"/>
</dbReference>
<dbReference type="Gene3D" id="1.10.10.1800">
    <property type="entry name" value="tRNA uridine 5-carboxymethylaminomethyl modification enzyme MnmG/GidA"/>
    <property type="match status" value="1"/>
</dbReference>
<dbReference type="HAMAP" id="MF_00129">
    <property type="entry name" value="MnmG_GidA"/>
    <property type="match status" value="1"/>
</dbReference>
<dbReference type="InterPro" id="IPR036188">
    <property type="entry name" value="FAD/NAD-bd_sf"/>
</dbReference>
<dbReference type="InterPro" id="IPR049312">
    <property type="entry name" value="GIDA_C_N"/>
</dbReference>
<dbReference type="InterPro" id="IPR004416">
    <property type="entry name" value="MnmG"/>
</dbReference>
<dbReference type="InterPro" id="IPR002218">
    <property type="entry name" value="MnmG-rel"/>
</dbReference>
<dbReference type="InterPro" id="IPR020595">
    <property type="entry name" value="MnmG-rel_CS"/>
</dbReference>
<dbReference type="InterPro" id="IPR026904">
    <property type="entry name" value="MnmG_C"/>
</dbReference>
<dbReference type="InterPro" id="IPR047001">
    <property type="entry name" value="MnmG_C_subdom"/>
</dbReference>
<dbReference type="InterPro" id="IPR044920">
    <property type="entry name" value="MnmG_C_subdom_sf"/>
</dbReference>
<dbReference type="InterPro" id="IPR040131">
    <property type="entry name" value="MnmG_N"/>
</dbReference>
<dbReference type="NCBIfam" id="TIGR00136">
    <property type="entry name" value="mnmG_gidA"/>
    <property type="match status" value="1"/>
</dbReference>
<dbReference type="PANTHER" id="PTHR11806">
    <property type="entry name" value="GLUCOSE INHIBITED DIVISION PROTEIN A"/>
    <property type="match status" value="1"/>
</dbReference>
<dbReference type="PANTHER" id="PTHR11806:SF0">
    <property type="entry name" value="PROTEIN MTO1 HOMOLOG, MITOCHONDRIAL"/>
    <property type="match status" value="1"/>
</dbReference>
<dbReference type="Pfam" id="PF01134">
    <property type="entry name" value="GIDA"/>
    <property type="match status" value="1"/>
</dbReference>
<dbReference type="Pfam" id="PF21680">
    <property type="entry name" value="GIDA_C_1st"/>
    <property type="match status" value="1"/>
</dbReference>
<dbReference type="Pfam" id="PF13932">
    <property type="entry name" value="SAM_GIDA_C"/>
    <property type="match status" value="1"/>
</dbReference>
<dbReference type="SMART" id="SM01228">
    <property type="entry name" value="GIDA_assoc_3"/>
    <property type="match status" value="1"/>
</dbReference>
<dbReference type="SUPFAM" id="SSF51905">
    <property type="entry name" value="FAD/NAD(P)-binding domain"/>
    <property type="match status" value="1"/>
</dbReference>
<dbReference type="PROSITE" id="PS01280">
    <property type="entry name" value="GIDA_1"/>
    <property type="match status" value="1"/>
</dbReference>
<dbReference type="PROSITE" id="PS01281">
    <property type="entry name" value="GIDA_2"/>
    <property type="match status" value="1"/>
</dbReference>
<gene>
    <name evidence="1" type="primary">mnmG</name>
    <name evidence="1" type="synonym">gidA</name>
    <name type="ordered locus">VCM66_2695</name>
</gene>
<sequence length="631" mass="70172">MLYHETFDVIVVGGGHAGTEAALAAARTGQRTLLLTHNIDTLGQMSCNPAIGGIGKGHLVKEVDAMGGLMAQAIDHAGIQFRTLNASKGPAVRATRAQADRALYKAYVRNVLENTPNLTLFQQAVDDVIVEHDHIRGVVTQMGLKFHAKAVVLTVGTFLGGKIHIGLENYAGGRAGDPPSIALAHRLRELPFRVDRLKTGTPPRIDANSVDFSVLEAQHGDNPTPVFSFMGKREHHPRQIPCYITHTNERTHDVIRANLDRSPMYAGIIEGIGPRYCPSIEDKVMRFADKDSHQIFIEPEGLTTTELYPNGISTSLPFDVQVQIVRSMKGFENAHIVRPGYAIEYDFFDPRDLKQTYETKYIHGLFFAGQINGTTGYEEAAAQGLMAGLNASLYSQDKEGWSPRRDQAYMGVLIDDLSTMGTKEPYRMFTSRAEYRLLLREDNADLRLTEKARELGLVDDARWARFNQKIDNMAKERQRLQETWMNPNSVGVEQLNTLLKTPMSREASGEDLLRRPEMTYELLTTLPAFAPALEDAEAAEQVEIQVKYDGYIQRQQDEIEKSLRHEHTKLPAELDYKQVKGLSNEVVLKLNAAKPETIGIASRISGITPAAISILLVHLKKHGMLKKGEAA</sequence>
<comment type="function">
    <text evidence="1">NAD-binding protein involved in the addition of a carboxymethylaminomethyl (cmnm) group at the wobble position (U34) of certain tRNAs, forming tRNA-cmnm(5)s(2)U34.</text>
</comment>
<comment type="cofactor">
    <cofactor evidence="1">
        <name>FAD</name>
        <dbReference type="ChEBI" id="CHEBI:57692"/>
    </cofactor>
</comment>
<comment type="subunit">
    <text evidence="1">Homodimer. Heterotetramer of two MnmE and two MnmG subunits.</text>
</comment>
<comment type="subcellular location">
    <subcellularLocation>
        <location evidence="1">Cytoplasm</location>
    </subcellularLocation>
</comment>
<comment type="similarity">
    <text evidence="1">Belongs to the MnmG family.</text>
</comment>
<accession>C3LSK0</accession>
<reference key="1">
    <citation type="journal article" date="2008" name="PLoS ONE">
        <title>A recalibrated molecular clock and independent origins for the cholera pandemic clones.</title>
        <authorList>
            <person name="Feng L."/>
            <person name="Reeves P.R."/>
            <person name="Lan R."/>
            <person name="Ren Y."/>
            <person name="Gao C."/>
            <person name="Zhou Z."/>
            <person name="Ren Y."/>
            <person name="Cheng J."/>
            <person name="Wang W."/>
            <person name="Wang J."/>
            <person name="Qian W."/>
            <person name="Li D."/>
            <person name="Wang L."/>
        </authorList>
    </citation>
    <scope>NUCLEOTIDE SEQUENCE [LARGE SCALE GENOMIC DNA]</scope>
    <source>
        <strain>M66-2</strain>
    </source>
</reference>
<organism>
    <name type="scientific">Vibrio cholerae serotype O1 (strain M66-2)</name>
    <dbReference type="NCBI Taxonomy" id="579112"/>
    <lineage>
        <taxon>Bacteria</taxon>
        <taxon>Pseudomonadati</taxon>
        <taxon>Pseudomonadota</taxon>
        <taxon>Gammaproteobacteria</taxon>
        <taxon>Vibrionales</taxon>
        <taxon>Vibrionaceae</taxon>
        <taxon>Vibrio</taxon>
    </lineage>
</organism>
<name>MNMG_VIBCM</name>
<feature type="chain" id="PRO_1000122758" description="tRNA uridine 5-carboxymethylaminomethyl modification enzyme MnmG">
    <location>
        <begin position="1"/>
        <end position="631"/>
    </location>
</feature>
<feature type="binding site" evidence="1">
    <location>
        <begin position="13"/>
        <end position="18"/>
    </location>
    <ligand>
        <name>FAD</name>
        <dbReference type="ChEBI" id="CHEBI:57692"/>
    </ligand>
</feature>
<feature type="binding site" evidence="1">
    <location>
        <position position="125"/>
    </location>
    <ligand>
        <name>FAD</name>
        <dbReference type="ChEBI" id="CHEBI:57692"/>
    </ligand>
</feature>
<feature type="binding site" evidence="1">
    <location>
        <position position="180"/>
    </location>
    <ligand>
        <name>FAD</name>
        <dbReference type="ChEBI" id="CHEBI:57692"/>
    </ligand>
</feature>
<feature type="binding site" evidence="1">
    <location>
        <begin position="273"/>
        <end position="287"/>
    </location>
    <ligand>
        <name>NAD(+)</name>
        <dbReference type="ChEBI" id="CHEBI:57540"/>
    </ligand>
</feature>
<feature type="binding site" evidence="1">
    <location>
        <position position="370"/>
    </location>
    <ligand>
        <name>FAD</name>
        <dbReference type="ChEBI" id="CHEBI:57692"/>
    </ligand>
</feature>
<protein>
    <recommendedName>
        <fullName evidence="1">tRNA uridine 5-carboxymethylaminomethyl modification enzyme MnmG</fullName>
    </recommendedName>
    <alternativeName>
        <fullName evidence="1">Glucose-inhibited division protein A</fullName>
    </alternativeName>
</protein>
<proteinExistence type="inferred from homology"/>
<evidence type="ECO:0000255" key="1">
    <source>
        <dbReference type="HAMAP-Rule" id="MF_00129"/>
    </source>
</evidence>